<keyword id="KW-0028">Amino-acid biosynthesis</keyword>
<keyword id="KW-0067">ATP-binding</keyword>
<keyword id="KW-0963">Cytoplasm</keyword>
<keyword id="KW-0418">Kinase</keyword>
<keyword id="KW-0547">Nucleotide-binding</keyword>
<keyword id="KW-1185">Reference proteome</keyword>
<keyword id="KW-0791">Threonine biosynthesis</keyword>
<keyword id="KW-0808">Transferase</keyword>
<name>KHSE_AQUAE</name>
<accession>O67332</accession>
<protein>
    <recommendedName>
        <fullName>Homoserine kinase</fullName>
        <shortName>HK</shortName>
        <shortName>HSK</shortName>
        <ecNumber>2.7.1.39</ecNumber>
    </recommendedName>
</protein>
<gene>
    <name type="primary">thrB</name>
    <name type="ordered locus">aq_1309</name>
</gene>
<feature type="chain" id="PRO_0000156546" description="Homoserine kinase">
    <location>
        <begin position="1"/>
        <end position="297"/>
    </location>
</feature>
<feature type="binding site" evidence="2">
    <location>
        <begin position="84"/>
        <end position="94"/>
    </location>
    <ligand>
        <name>ATP</name>
        <dbReference type="ChEBI" id="CHEBI:30616"/>
    </ligand>
</feature>
<evidence type="ECO:0000250" key="1"/>
<evidence type="ECO:0000255" key="2"/>
<evidence type="ECO:0000305" key="3"/>
<sequence length="297" mass="32679">MIKIEVPATTTNFGSGFDTFGLALSLTNTFSVDFSDKYEVQIEGYSSGIPKDQKNLFIKVYKKTCQSIGKKPKPLKLIQENRVPPARGLGSSATAIVGGIEAALALHKVELPLKEKLKIAFEFEKHPDNIIPAFVGGFTVCATSESGVIFKKLPFPEDIKIVFVIPDFEVSTSEARRVLPKKVELKEAVFNVQRSALFVSALLTKDYKLLREAVRDKLHQPYREKLVPGLSEAILVSYKEGALATFLSGAGPTICSLTTENEEKIGEAIREVITKFSGYDAQVMVLKARNEGVKVYS</sequence>
<proteinExistence type="inferred from homology"/>
<organism>
    <name type="scientific">Aquifex aeolicus (strain VF5)</name>
    <dbReference type="NCBI Taxonomy" id="224324"/>
    <lineage>
        <taxon>Bacteria</taxon>
        <taxon>Pseudomonadati</taxon>
        <taxon>Aquificota</taxon>
        <taxon>Aquificia</taxon>
        <taxon>Aquificales</taxon>
        <taxon>Aquificaceae</taxon>
        <taxon>Aquifex</taxon>
    </lineage>
</organism>
<dbReference type="EC" id="2.7.1.39"/>
<dbReference type="EMBL" id="AE000657">
    <property type="protein sequence ID" value="AAC07283.1"/>
    <property type="molecule type" value="Genomic_DNA"/>
</dbReference>
<dbReference type="PIR" id="A70413">
    <property type="entry name" value="A70413"/>
</dbReference>
<dbReference type="RefSeq" id="NP_213896.1">
    <property type="nucleotide sequence ID" value="NC_000918.1"/>
</dbReference>
<dbReference type="RefSeq" id="WP_010880834.1">
    <property type="nucleotide sequence ID" value="NC_000918.1"/>
</dbReference>
<dbReference type="SMR" id="O67332"/>
<dbReference type="FunCoup" id="O67332">
    <property type="interactions" value="353"/>
</dbReference>
<dbReference type="STRING" id="224324.aq_1309"/>
<dbReference type="EnsemblBacteria" id="AAC07283">
    <property type="protein sequence ID" value="AAC07283"/>
    <property type="gene ID" value="aq_1309"/>
</dbReference>
<dbReference type="KEGG" id="aae:aq_1309"/>
<dbReference type="PATRIC" id="fig|224324.8.peg.1020"/>
<dbReference type="eggNOG" id="COG0083">
    <property type="taxonomic scope" value="Bacteria"/>
</dbReference>
<dbReference type="HOGENOM" id="CLU_041243_0_2_0"/>
<dbReference type="InParanoid" id="O67332"/>
<dbReference type="OrthoDB" id="9769912at2"/>
<dbReference type="UniPathway" id="UPA00050">
    <property type="reaction ID" value="UER00064"/>
</dbReference>
<dbReference type="Proteomes" id="UP000000798">
    <property type="component" value="Chromosome"/>
</dbReference>
<dbReference type="GO" id="GO:0005737">
    <property type="term" value="C:cytoplasm"/>
    <property type="evidence" value="ECO:0007669"/>
    <property type="project" value="UniProtKB-SubCell"/>
</dbReference>
<dbReference type="GO" id="GO:0005524">
    <property type="term" value="F:ATP binding"/>
    <property type="evidence" value="ECO:0007669"/>
    <property type="project" value="UniProtKB-UniRule"/>
</dbReference>
<dbReference type="GO" id="GO:0004413">
    <property type="term" value="F:homoserine kinase activity"/>
    <property type="evidence" value="ECO:0007669"/>
    <property type="project" value="UniProtKB-UniRule"/>
</dbReference>
<dbReference type="GO" id="GO:0009088">
    <property type="term" value="P:threonine biosynthetic process"/>
    <property type="evidence" value="ECO:0007669"/>
    <property type="project" value="UniProtKB-UniRule"/>
</dbReference>
<dbReference type="Gene3D" id="3.30.230.10">
    <property type="match status" value="1"/>
</dbReference>
<dbReference type="Gene3D" id="3.30.70.890">
    <property type="entry name" value="GHMP kinase, C-terminal domain"/>
    <property type="match status" value="1"/>
</dbReference>
<dbReference type="HAMAP" id="MF_00384">
    <property type="entry name" value="Homoser_kinase"/>
    <property type="match status" value="1"/>
</dbReference>
<dbReference type="InterPro" id="IPR013750">
    <property type="entry name" value="GHMP_kinase_C_dom"/>
</dbReference>
<dbReference type="InterPro" id="IPR036554">
    <property type="entry name" value="GHMP_kinase_C_sf"/>
</dbReference>
<dbReference type="InterPro" id="IPR006204">
    <property type="entry name" value="GHMP_kinase_N_dom"/>
</dbReference>
<dbReference type="InterPro" id="IPR006203">
    <property type="entry name" value="GHMP_knse_ATP-bd_CS"/>
</dbReference>
<dbReference type="InterPro" id="IPR000870">
    <property type="entry name" value="Homoserine_kinase"/>
</dbReference>
<dbReference type="InterPro" id="IPR020568">
    <property type="entry name" value="Ribosomal_Su5_D2-typ_SF"/>
</dbReference>
<dbReference type="InterPro" id="IPR014721">
    <property type="entry name" value="Ribsml_uS5_D2-typ_fold_subgr"/>
</dbReference>
<dbReference type="NCBIfam" id="TIGR00191">
    <property type="entry name" value="thrB"/>
    <property type="match status" value="1"/>
</dbReference>
<dbReference type="PANTHER" id="PTHR20861:SF1">
    <property type="entry name" value="HOMOSERINE KINASE"/>
    <property type="match status" value="1"/>
</dbReference>
<dbReference type="PANTHER" id="PTHR20861">
    <property type="entry name" value="HOMOSERINE/4-DIPHOSPHOCYTIDYL-2-C-METHYL-D-ERYTHRITOL KINASE"/>
    <property type="match status" value="1"/>
</dbReference>
<dbReference type="Pfam" id="PF08544">
    <property type="entry name" value="GHMP_kinases_C"/>
    <property type="match status" value="1"/>
</dbReference>
<dbReference type="Pfam" id="PF00288">
    <property type="entry name" value="GHMP_kinases_N"/>
    <property type="match status" value="1"/>
</dbReference>
<dbReference type="PIRSF" id="PIRSF000676">
    <property type="entry name" value="Homoser_kin"/>
    <property type="match status" value="1"/>
</dbReference>
<dbReference type="PRINTS" id="PR00958">
    <property type="entry name" value="HOMSERKINASE"/>
</dbReference>
<dbReference type="SUPFAM" id="SSF55060">
    <property type="entry name" value="GHMP Kinase, C-terminal domain"/>
    <property type="match status" value="1"/>
</dbReference>
<dbReference type="SUPFAM" id="SSF54211">
    <property type="entry name" value="Ribosomal protein S5 domain 2-like"/>
    <property type="match status" value="1"/>
</dbReference>
<dbReference type="PROSITE" id="PS00627">
    <property type="entry name" value="GHMP_KINASES_ATP"/>
    <property type="match status" value="1"/>
</dbReference>
<reference key="1">
    <citation type="journal article" date="1998" name="Nature">
        <title>The complete genome of the hyperthermophilic bacterium Aquifex aeolicus.</title>
        <authorList>
            <person name="Deckert G."/>
            <person name="Warren P.V."/>
            <person name="Gaasterland T."/>
            <person name="Young W.G."/>
            <person name="Lenox A.L."/>
            <person name="Graham D.E."/>
            <person name="Overbeek R."/>
            <person name="Snead M.A."/>
            <person name="Keller M."/>
            <person name="Aujay M."/>
            <person name="Huber R."/>
            <person name="Feldman R.A."/>
            <person name="Short J.M."/>
            <person name="Olsen G.J."/>
            <person name="Swanson R.V."/>
        </authorList>
    </citation>
    <scope>NUCLEOTIDE SEQUENCE [LARGE SCALE GENOMIC DNA]</scope>
    <source>
        <strain>VF5</strain>
    </source>
</reference>
<comment type="function">
    <text evidence="1">Catalyzes the ATP-dependent phosphorylation of L-homoserine to L-homoserine phosphate.</text>
</comment>
<comment type="catalytic activity">
    <reaction>
        <text>L-homoserine + ATP = O-phospho-L-homoserine + ADP + H(+)</text>
        <dbReference type="Rhea" id="RHEA:13985"/>
        <dbReference type="ChEBI" id="CHEBI:15378"/>
        <dbReference type="ChEBI" id="CHEBI:30616"/>
        <dbReference type="ChEBI" id="CHEBI:57476"/>
        <dbReference type="ChEBI" id="CHEBI:57590"/>
        <dbReference type="ChEBI" id="CHEBI:456216"/>
        <dbReference type="EC" id="2.7.1.39"/>
    </reaction>
</comment>
<comment type="pathway">
    <text>Amino-acid biosynthesis; L-threonine biosynthesis; L-threonine from L-aspartate: step 4/5.</text>
</comment>
<comment type="subcellular location">
    <subcellularLocation>
        <location evidence="3">Cytoplasm</location>
    </subcellularLocation>
</comment>
<comment type="similarity">
    <text evidence="3">Belongs to the GHMP kinase family. Homoserine kinase subfamily.</text>
</comment>